<protein>
    <recommendedName>
        <fullName evidence="1">UPF0340 protein LL0489</fullName>
    </recommendedName>
</protein>
<evidence type="ECO:0000255" key="1">
    <source>
        <dbReference type="HAMAP-Rule" id="MF_00800"/>
    </source>
</evidence>
<comment type="similarity">
    <text evidence="1">Belongs to the UPF0340 family.</text>
</comment>
<reference key="1">
    <citation type="journal article" date="2001" name="Genome Res.">
        <title>The complete genome sequence of the lactic acid bacterium Lactococcus lactis ssp. lactis IL1403.</title>
        <authorList>
            <person name="Bolotin A."/>
            <person name="Wincker P."/>
            <person name="Mauger S."/>
            <person name="Jaillon O."/>
            <person name="Malarme K."/>
            <person name="Weissenbach J."/>
            <person name="Ehrlich S.D."/>
            <person name="Sorokin A."/>
        </authorList>
    </citation>
    <scope>NUCLEOTIDE SEQUENCE [LARGE SCALE GENOMIC DNA]</scope>
    <source>
        <strain>IL1403</strain>
    </source>
</reference>
<organism>
    <name type="scientific">Lactococcus lactis subsp. lactis (strain IL1403)</name>
    <name type="common">Streptococcus lactis</name>
    <dbReference type="NCBI Taxonomy" id="272623"/>
    <lineage>
        <taxon>Bacteria</taxon>
        <taxon>Bacillati</taxon>
        <taxon>Bacillota</taxon>
        <taxon>Bacilli</taxon>
        <taxon>Lactobacillales</taxon>
        <taxon>Streptococcaceae</taxon>
        <taxon>Lactococcus</taxon>
    </lineage>
</organism>
<gene>
    <name type="primary">yeiF</name>
    <name type="ordered locus">LL0489</name>
    <name type="ORF">L86338</name>
</gene>
<proteinExistence type="inferred from homology"/>
<feature type="chain" id="PRO_0000213008" description="UPF0340 protein LL0489">
    <location>
        <begin position="1"/>
        <end position="180"/>
    </location>
</feature>
<dbReference type="EMBL" id="AE005176">
    <property type="protein sequence ID" value="AAK04587.1"/>
    <property type="molecule type" value="Genomic_DNA"/>
</dbReference>
<dbReference type="PIR" id="A86686">
    <property type="entry name" value="A86686"/>
</dbReference>
<dbReference type="RefSeq" id="NP_266645.1">
    <property type="nucleotide sequence ID" value="NC_002662.1"/>
</dbReference>
<dbReference type="RefSeq" id="WP_010905395.1">
    <property type="nucleotide sequence ID" value="NC_002662.1"/>
</dbReference>
<dbReference type="SMR" id="Q9CI77"/>
<dbReference type="PaxDb" id="272623-L86338"/>
<dbReference type="EnsemblBacteria" id="AAK04587">
    <property type="protein sequence ID" value="AAK04587"/>
    <property type="gene ID" value="L86338"/>
</dbReference>
<dbReference type="KEGG" id="lla:L86338"/>
<dbReference type="PATRIC" id="fig|272623.7.peg.529"/>
<dbReference type="eggNOG" id="COG4475">
    <property type="taxonomic scope" value="Bacteria"/>
</dbReference>
<dbReference type="HOGENOM" id="CLU_106658_0_0_9"/>
<dbReference type="OrthoDB" id="9803187at2"/>
<dbReference type="Proteomes" id="UP000002196">
    <property type="component" value="Chromosome"/>
</dbReference>
<dbReference type="Gene3D" id="3.40.50.10360">
    <property type="entry name" value="Hypothetical protein TT1679"/>
    <property type="match status" value="1"/>
</dbReference>
<dbReference type="HAMAP" id="MF_00800">
    <property type="entry name" value="UPF0340"/>
    <property type="match status" value="1"/>
</dbReference>
<dbReference type="InterPro" id="IPR028345">
    <property type="entry name" value="Antibiotic_NAT-like"/>
</dbReference>
<dbReference type="InterPro" id="IPR006340">
    <property type="entry name" value="DUF436"/>
</dbReference>
<dbReference type="NCBIfam" id="TIGR01440">
    <property type="entry name" value="TIGR01440 family protein"/>
    <property type="match status" value="1"/>
</dbReference>
<dbReference type="Pfam" id="PF04260">
    <property type="entry name" value="DUF436"/>
    <property type="match status" value="1"/>
</dbReference>
<dbReference type="PIRSF" id="PIRSF007510">
    <property type="entry name" value="UCP007510"/>
    <property type="match status" value="1"/>
</dbReference>
<dbReference type="SUPFAM" id="SSF110710">
    <property type="entry name" value="TTHA0583/YokD-like"/>
    <property type="match status" value="1"/>
</dbReference>
<accession>Q9CI77</accession>
<name>Y489_LACLA</name>
<keyword id="KW-1185">Reference proteome</keyword>
<sequence length="180" mass="19452">MDLEKLKKDTQVIIDDVIKQTEIKAGQVFVLGLSSSEVNGGLIGHASSSEIGQVIVSVIHKTLSDKGIYLAVQACEHLNRALLIEEELAEKKDWEIVSVIPQLHAGGSGQVAAYQLFKSPVEVEHIVANAGLDIGDTSIGMHVKHVQIPVRPILRELGGAHVTALKSRPKLIGGERARYK</sequence>